<reference key="1">
    <citation type="journal article" date="2002" name="Proc. Natl. Acad. Sci. U.S.A.">
        <title>Extensive mosaic structure revealed by the complete genome sequence of uropathogenic Escherichia coli.</title>
        <authorList>
            <person name="Welch R.A."/>
            <person name="Burland V."/>
            <person name="Plunkett G. III"/>
            <person name="Redford P."/>
            <person name="Roesch P."/>
            <person name="Rasko D."/>
            <person name="Buckles E.L."/>
            <person name="Liou S.-R."/>
            <person name="Boutin A."/>
            <person name="Hackett J."/>
            <person name="Stroud D."/>
            <person name="Mayhew G.F."/>
            <person name="Rose D.J."/>
            <person name="Zhou S."/>
            <person name="Schwartz D.C."/>
            <person name="Perna N.T."/>
            <person name="Mobley H.L.T."/>
            <person name="Donnenberg M.S."/>
            <person name="Blattner F.R."/>
        </authorList>
    </citation>
    <scope>NUCLEOTIDE SEQUENCE [LARGE SCALE GENOMIC DNA]</scope>
    <source>
        <strain>CFT073 / ATCC 700928 / UPEC</strain>
    </source>
</reference>
<feature type="chain" id="PRO_0000168589" description="Probable diguanylate cyclase DgcC">
    <location>
        <begin position="1"/>
        <end position="371"/>
    </location>
</feature>
<feature type="transmembrane region" description="Helical" evidence="3">
    <location>
        <begin position="46"/>
        <end position="66"/>
    </location>
</feature>
<feature type="transmembrane region" description="Helical" evidence="3">
    <location>
        <begin position="68"/>
        <end position="88"/>
    </location>
</feature>
<feature type="transmembrane region" description="Helical" evidence="3">
    <location>
        <begin position="112"/>
        <end position="132"/>
    </location>
</feature>
<feature type="transmembrane region" description="Helical" evidence="3">
    <location>
        <begin position="143"/>
        <end position="163"/>
    </location>
</feature>
<feature type="transmembrane region" description="Helical" evidence="3">
    <location>
        <begin position="171"/>
        <end position="191"/>
    </location>
</feature>
<feature type="domain" description="GGDEF" evidence="4">
    <location>
        <begin position="240"/>
        <end position="371"/>
    </location>
</feature>
<feature type="binding site" evidence="1">
    <location>
        <position position="248"/>
    </location>
    <ligand>
        <name>Mg(2+)</name>
        <dbReference type="ChEBI" id="CHEBI:18420"/>
    </ligand>
</feature>
<feature type="binding site" evidence="1">
    <location>
        <position position="249"/>
    </location>
    <ligand>
        <name>Mg(2+)</name>
        <dbReference type="ChEBI" id="CHEBI:18420"/>
    </ligand>
</feature>
<feature type="binding site" evidence="1">
    <location>
        <position position="256"/>
    </location>
    <ligand>
        <name>substrate</name>
    </ligand>
</feature>
<feature type="binding site" evidence="1">
    <location>
        <position position="265"/>
    </location>
    <ligand>
        <name>substrate</name>
    </ligand>
</feature>
<feature type="binding site" evidence="1">
    <location>
        <position position="291"/>
    </location>
    <ligand>
        <name>Mg(2+)</name>
        <dbReference type="ChEBI" id="CHEBI:18420"/>
    </ligand>
</feature>
<feature type="site" description="Transition state stabilizer" evidence="3">
    <location>
        <position position="253"/>
    </location>
</feature>
<accession>P0AAP2</accession>
<accession>P21830</accession>
<accession>P77719</accession>
<comment type="function">
    <text evidence="2">A probable diguanylate cyclase.</text>
</comment>
<comment type="catalytic activity">
    <reaction evidence="2">
        <text>2 GTP = 3',3'-c-di-GMP + 2 diphosphate</text>
        <dbReference type="Rhea" id="RHEA:24898"/>
        <dbReference type="ChEBI" id="CHEBI:33019"/>
        <dbReference type="ChEBI" id="CHEBI:37565"/>
        <dbReference type="ChEBI" id="CHEBI:58805"/>
        <dbReference type="EC" id="2.7.7.65"/>
    </reaction>
</comment>
<comment type="cofactor">
    <cofactor evidence="1">
        <name>Mg(2+)</name>
        <dbReference type="ChEBI" id="CHEBI:18420"/>
    </cofactor>
    <text evidence="2">Binds 1 Mg(2+) ion per monomer.</text>
</comment>
<comment type="pathway">
    <text evidence="2">Purine metabolism; 3',5'-cyclic di-GMP biosynthesis.</text>
</comment>
<comment type="subcellular location">
    <subcellularLocation>
        <location evidence="5">Cell inner membrane</location>
        <topology evidence="3">Multi-pass membrane protein</topology>
    </subcellularLocation>
</comment>
<dbReference type="EC" id="2.7.7.65" evidence="2"/>
<dbReference type="EMBL" id="AE014075">
    <property type="protein sequence ID" value="AAN78970.1"/>
    <property type="molecule type" value="Genomic_DNA"/>
</dbReference>
<dbReference type="RefSeq" id="WP_000484048.1">
    <property type="nucleotide sequence ID" value="NZ_CP051263.1"/>
</dbReference>
<dbReference type="SMR" id="P0AAP2"/>
<dbReference type="STRING" id="199310.c0492"/>
<dbReference type="GeneID" id="75170359"/>
<dbReference type="KEGG" id="ecc:c0492"/>
<dbReference type="eggNOG" id="COG3706">
    <property type="taxonomic scope" value="Bacteria"/>
</dbReference>
<dbReference type="HOGENOM" id="CLU_000445_11_1_6"/>
<dbReference type="BioCyc" id="ECOL199310:C0492-MONOMER"/>
<dbReference type="UniPathway" id="UPA00599"/>
<dbReference type="Proteomes" id="UP000001410">
    <property type="component" value="Chromosome"/>
</dbReference>
<dbReference type="GO" id="GO:0005886">
    <property type="term" value="C:plasma membrane"/>
    <property type="evidence" value="ECO:0007669"/>
    <property type="project" value="UniProtKB-SubCell"/>
</dbReference>
<dbReference type="GO" id="GO:0052621">
    <property type="term" value="F:diguanylate cyclase activity"/>
    <property type="evidence" value="ECO:0007669"/>
    <property type="project" value="UniProtKB-EC"/>
</dbReference>
<dbReference type="GO" id="GO:0005525">
    <property type="term" value="F:GTP binding"/>
    <property type="evidence" value="ECO:0007669"/>
    <property type="project" value="UniProtKB-KW"/>
</dbReference>
<dbReference type="GO" id="GO:0046872">
    <property type="term" value="F:metal ion binding"/>
    <property type="evidence" value="ECO:0007669"/>
    <property type="project" value="UniProtKB-KW"/>
</dbReference>
<dbReference type="GO" id="GO:0043709">
    <property type="term" value="P:cell adhesion involved in single-species biofilm formation"/>
    <property type="evidence" value="ECO:0007669"/>
    <property type="project" value="TreeGrafter"/>
</dbReference>
<dbReference type="GO" id="GO:1902201">
    <property type="term" value="P:negative regulation of bacterial-type flagellum-dependent cell motility"/>
    <property type="evidence" value="ECO:0007669"/>
    <property type="project" value="TreeGrafter"/>
</dbReference>
<dbReference type="CDD" id="cd01949">
    <property type="entry name" value="GGDEF"/>
    <property type="match status" value="1"/>
</dbReference>
<dbReference type="FunFam" id="3.30.70.270:FF:000001">
    <property type="entry name" value="Diguanylate cyclase domain protein"/>
    <property type="match status" value="1"/>
</dbReference>
<dbReference type="Gene3D" id="3.30.70.270">
    <property type="match status" value="1"/>
</dbReference>
<dbReference type="InterPro" id="IPR050469">
    <property type="entry name" value="Diguanylate_Cyclase"/>
</dbReference>
<dbReference type="InterPro" id="IPR000160">
    <property type="entry name" value="GGDEF_dom"/>
</dbReference>
<dbReference type="InterPro" id="IPR007894">
    <property type="entry name" value="MASE2"/>
</dbReference>
<dbReference type="InterPro" id="IPR029787">
    <property type="entry name" value="Nucleotide_cyclase"/>
</dbReference>
<dbReference type="InterPro" id="IPR043128">
    <property type="entry name" value="Rev_trsase/Diguanyl_cyclase"/>
</dbReference>
<dbReference type="NCBIfam" id="TIGR00254">
    <property type="entry name" value="GGDEF"/>
    <property type="match status" value="1"/>
</dbReference>
<dbReference type="NCBIfam" id="NF007599">
    <property type="entry name" value="PRK10245.1"/>
    <property type="match status" value="1"/>
</dbReference>
<dbReference type="PANTHER" id="PTHR45138:SF24">
    <property type="entry name" value="DIGUANYLATE CYCLASE DGCC-RELATED"/>
    <property type="match status" value="1"/>
</dbReference>
<dbReference type="PANTHER" id="PTHR45138">
    <property type="entry name" value="REGULATORY COMPONENTS OF SENSORY TRANSDUCTION SYSTEM"/>
    <property type="match status" value="1"/>
</dbReference>
<dbReference type="Pfam" id="PF00990">
    <property type="entry name" value="GGDEF"/>
    <property type="match status" value="1"/>
</dbReference>
<dbReference type="Pfam" id="PF05230">
    <property type="entry name" value="MASE2"/>
    <property type="match status" value="1"/>
</dbReference>
<dbReference type="SMART" id="SM00267">
    <property type="entry name" value="GGDEF"/>
    <property type="match status" value="1"/>
</dbReference>
<dbReference type="SUPFAM" id="SSF55073">
    <property type="entry name" value="Nucleotide cyclase"/>
    <property type="match status" value="1"/>
</dbReference>
<dbReference type="PROSITE" id="PS50887">
    <property type="entry name" value="GGDEF"/>
    <property type="match status" value="1"/>
</dbReference>
<evidence type="ECO:0000250" key="1">
    <source>
        <dbReference type="UniProtKB" id="B8GZM2"/>
    </source>
</evidence>
<evidence type="ECO:0000250" key="2">
    <source>
        <dbReference type="UniProtKB" id="P0AAP1"/>
    </source>
</evidence>
<evidence type="ECO:0000255" key="3"/>
<evidence type="ECO:0000255" key="4">
    <source>
        <dbReference type="PROSITE-ProRule" id="PRU00095"/>
    </source>
</evidence>
<evidence type="ECO:0000305" key="5"/>
<name>DGCC_ECOL6</name>
<proteinExistence type="inferred from homology"/>
<organism>
    <name type="scientific">Escherichia coli O6:H1 (strain CFT073 / ATCC 700928 / UPEC)</name>
    <dbReference type="NCBI Taxonomy" id="199310"/>
    <lineage>
        <taxon>Bacteria</taxon>
        <taxon>Pseudomonadati</taxon>
        <taxon>Pseudomonadota</taxon>
        <taxon>Gammaproteobacteria</taxon>
        <taxon>Enterobacterales</taxon>
        <taxon>Enterobacteriaceae</taxon>
        <taxon>Escherichia</taxon>
    </lineage>
</organism>
<sequence length="371" mass="41537">MFPKIMNDENFFKKAAAHGEEPPLTPQNEHQRSGLRFARRVRLPRAVGLAGMFLPIASTLVSHPPPGWWWLVLVGWAFVWPHLAWQIASRAVDPLSREIYNLKTDAVLAGMWVGVMGVNVLPSTAMLMIMCLNLMGAGGPRLFVAGLVLMVVSCLVTLELTGITVSFNSAPLEWWLSLPIIVIYPLLFGWVSYQTATKLAEHKRRLQVMSTRDGMTGVYNRRHWETMLRNEFDNCRRHNRDATLLIIDIDHFKSINDTWGHDVGDEAIVALTRQLQITLRGSDVIGRFGGDEFAVIMSGTPAESAITAMLRVHEGLNTLRLPNTPQVTLRISVGVAPLNPQMSHYREWLKSADLALYKAKKAGRNRTEVAA</sequence>
<protein>
    <recommendedName>
        <fullName evidence="2">Probable diguanylate cyclase DgcC</fullName>
        <shortName evidence="2">DGC</shortName>
        <ecNumber evidence="2">2.7.7.65</ecNumber>
    </recommendedName>
</protein>
<keyword id="KW-0997">Cell inner membrane</keyword>
<keyword id="KW-1003">Cell membrane</keyword>
<keyword id="KW-0342">GTP-binding</keyword>
<keyword id="KW-0460">Magnesium</keyword>
<keyword id="KW-0472">Membrane</keyword>
<keyword id="KW-0479">Metal-binding</keyword>
<keyword id="KW-0547">Nucleotide-binding</keyword>
<keyword id="KW-1185">Reference proteome</keyword>
<keyword id="KW-0808">Transferase</keyword>
<keyword id="KW-0812">Transmembrane</keyword>
<keyword id="KW-1133">Transmembrane helix</keyword>
<gene>
    <name evidence="2" type="primary">dgcC</name>
    <name type="synonym">adrA</name>
    <name type="ordered locus">c0492</name>
</gene>